<feature type="chain" id="PRO_1000052449" description="Large ribosomal subunit protein uL4">
    <location>
        <begin position="1"/>
        <end position="224"/>
    </location>
</feature>
<feature type="region of interest" description="Disordered" evidence="2">
    <location>
        <begin position="52"/>
        <end position="109"/>
    </location>
</feature>
<dbReference type="EMBL" id="CP000325">
    <property type="protein sequence ID" value="ABL03433.1"/>
    <property type="molecule type" value="Genomic_DNA"/>
</dbReference>
<dbReference type="RefSeq" id="WP_011739058.1">
    <property type="nucleotide sequence ID" value="NC_008611.1"/>
</dbReference>
<dbReference type="SMR" id="A0PM64"/>
<dbReference type="KEGG" id="mul:MUL_0791"/>
<dbReference type="eggNOG" id="COG0088">
    <property type="taxonomic scope" value="Bacteria"/>
</dbReference>
<dbReference type="HOGENOM" id="CLU_041575_5_0_11"/>
<dbReference type="Proteomes" id="UP000000765">
    <property type="component" value="Chromosome"/>
</dbReference>
<dbReference type="GO" id="GO:1990904">
    <property type="term" value="C:ribonucleoprotein complex"/>
    <property type="evidence" value="ECO:0007669"/>
    <property type="project" value="UniProtKB-KW"/>
</dbReference>
<dbReference type="GO" id="GO:0005840">
    <property type="term" value="C:ribosome"/>
    <property type="evidence" value="ECO:0007669"/>
    <property type="project" value="UniProtKB-KW"/>
</dbReference>
<dbReference type="GO" id="GO:0019843">
    <property type="term" value="F:rRNA binding"/>
    <property type="evidence" value="ECO:0007669"/>
    <property type="project" value="UniProtKB-UniRule"/>
</dbReference>
<dbReference type="GO" id="GO:0003735">
    <property type="term" value="F:structural constituent of ribosome"/>
    <property type="evidence" value="ECO:0007669"/>
    <property type="project" value="InterPro"/>
</dbReference>
<dbReference type="GO" id="GO:0006412">
    <property type="term" value="P:translation"/>
    <property type="evidence" value="ECO:0007669"/>
    <property type="project" value="UniProtKB-UniRule"/>
</dbReference>
<dbReference type="FunFam" id="3.40.1370.10:FF:000004">
    <property type="entry name" value="50S ribosomal protein L4"/>
    <property type="match status" value="1"/>
</dbReference>
<dbReference type="Gene3D" id="3.40.1370.10">
    <property type="match status" value="1"/>
</dbReference>
<dbReference type="HAMAP" id="MF_01328_B">
    <property type="entry name" value="Ribosomal_uL4_B"/>
    <property type="match status" value="1"/>
</dbReference>
<dbReference type="InterPro" id="IPR002136">
    <property type="entry name" value="Ribosomal_uL4"/>
</dbReference>
<dbReference type="InterPro" id="IPR013005">
    <property type="entry name" value="Ribosomal_uL4-like"/>
</dbReference>
<dbReference type="InterPro" id="IPR023574">
    <property type="entry name" value="Ribosomal_uL4_dom_sf"/>
</dbReference>
<dbReference type="NCBIfam" id="TIGR03953">
    <property type="entry name" value="rplD_bact"/>
    <property type="match status" value="1"/>
</dbReference>
<dbReference type="PANTHER" id="PTHR10746">
    <property type="entry name" value="50S RIBOSOMAL PROTEIN L4"/>
    <property type="match status" value="1"/>
</dbReference>
<dbReference type="PANTHER" id="PTHR10746:SF6">
    <property type="entry name" value="LARGE RIBOSOMAL SUBUNIT PROTEIN UL4M"/>
    <property type="match status" value="1"/>
</dbReference>
<dbReference type="Pfam" id="PF00573">
    <property type="entry name" value="Ribosomal_L4"/>
    <property type="match status" value="1"/>
</dbReference>
<dbReference type="SUPFAM" id="SSF52166">
    <property type="entry name" value="Ribosomal protein L4"/>
    <property type="match status" value="1"/>
</dbReference>
<organism>
    <name type="scientific">Mycobacterium ulcerans (strain Agy99)</name>
    <dbReference type="NCBI Taxonomy" id="362242"/>
    <lineage>
        <taxon>Bacteria</taxon>
        <taxon>Bacillati</taxon>
        <taxon>Actinomycetota</taxon>
        <taxon>Actinomycetes</taxon>
        <taxon>Mycobacteriales</taxon>
        <taxon>Mycobacteriaceae</taxon>
        <taxon>Mycobacterium</taxon>
        <taxon>Mycobacterium ulcerans group</taxon>
    </lineage>
</organism>
<protein>
    <recommendedName>
        <fullName evidence="1">Large ribosomal subunit protein uL4</fullName>
    </recommendedName>
    <alternativeName>
        <fullName evidence="3">50S ribosomal protein L4</fullName>
    </alternativeName>
</protein>
<reference key="1">
    <citation type="journal article" date="2007" name="Genome Res.">
        <title>Reductive evolution and niche adaptation inferred from the genome of Mycobacterium ulcerans, the causative agent of Buruli ulcer.</title>
        <authorList>
            <person name="Stinear T.P."/>
            <person name="Seemann T."/>
            <person name="Pidot S."/>
            <person name="Frigui W."/>
            <person name="Reysset G."/>
            <person name="Garnier T."/>
            <person name="Meurice G."/>
            <person name="Simon D."/>
            <person name="Bouchier C."/>
            <person name="Ma L."/>
            <person name="Tichit M."/>
            <person name="Porter J.L."/>
            <person name="Ryan J."/>
            <person name="Johnson P.D.R."/>
            <person name="Davies J.K."/>
            <person name="Jenkin G.A."/>
            <person name="Small P.L.C."/>
            <person name="Jones L.M."/>
            <person name="Tekaia F."/>
            <person name="Laval F."/>
            <person name="Daffe M."/>
            <person name="Parkhill J."/>
            <person name="Cole S.T."/>
        </authorList>
    </citation>
    <scope>NUCLEOTIDE SEQUENCE [LARGE SCALE GENOMIC DNA]</scope>
    <source>
        <strain>Agy99</strain>
    </source>
</reference>
<sequence>MAAQNQSAQKDLEIQVKAPDGKVDGSVVLPAELFDVPANIALMHQVVTAQRAAARQGTHSTKTRGDVSGGGRKPYRQKGTGRARQGSTRTPQFTGGGVVHGPKPRDYSQRTPKKMIAAALRGALSDRARNGRIHAVTELVAGQTPSTKSAKTFLATITDRKQVLVVIGRDDQTGVKSVRNLPGVHILSPDQLNTYDVLRADDVVFSVEALNAYIAANTSEEVSA</sequence>
<name>RL4_MYCUA</name>
<proteinExistence type="inferred from homology"/>
<gene>
    <name evidence="1" type="primary">rplD</name>
    <name type="ordered locus">MUL_0791</name>
</gene>
<evidence type="ECO:0000255" key="1">
    <source>
        <dbReference type="HAMAP-Rule" id="MF_01328"/>
    </source>
</evidence>
<evidence type="ECO:0000256" key="2">
    <source>
        <dbReference type="SAM" id="MobiDB-lite"/>
    </source>
</evidence>
<evidence type="ECO:0000305" key="3"/>
<accession>A0PM64</accession>
<comment type="function">
    <text evidence="1">One of the primary rRNA binding proteins, this protein initially binds near the 5'-end of the 23S rRNA. It is important during the early stages of 50S assembly. It makes multiple contacts with different domains of the 23S rRNA in the assembled 50S subunit and ribosome.</text>
</comment>
<comment type="function">
    <text evidence="1">Forms part of the polypeptide exit tunnel.</text>
</comment>
<comment type="subunit">
    <text evidence="1">Part of the 50S ribosomal subunit.</text>
</comment>
<comment type="similarity">
    <text evidence="1">Belongs to the universal ribosomal protein uL4 family.</text>
</comment>
<keyword id="KW-0687">Ribonucleoprotein</keyword>
<keyword id="KW-0689">Ribosomal protein</keyword>
<keyword id="KW-0694">RNA-binding</keyword>
<keyword id="KW-0699">rRNA-binding</keyword>